<protein>
    <recommendedName>
        <fullName>Alpha-keto-acid decarboxylase</fullName>
        <shortName>KDC</shortName>
        <ecNumber>4.1.1.-</ecNumber>
    </recommendedName>
</protein>
<sequence length="569" mass="61146">MTAPKIEAVYTVGAYLLDRLAELGVTEIFGVPGDYTLEFLDHIVAHPTIRWVGNANELNAGYAADGYGRLRGISALVTTFGVGELSAANAIAGSYAEHVPVVHIVGAPPKDAQSTHRALHHSLGDGDFEHFIRISSEITCSQANLTTATACKEIDRVLSEVRKHKRPGYILLSTDVARFPTEPPAAPLPGHTDGTSPRALSLFIDAATKLIADKRMTVLADLLVHRLQVVKELETLLTADVVPYATLMWGKSLLDESSPNFLGIYAGAASTEAVRAAIEQAPVLVTAGVVFTDMVSGFFSQRIDPARTIDVGQYQSSVADKVFTPLEMGDALEALASILVRRGVSSPPVELPPGNPTADTPSPTQRLTQQILWDRLCAALTPGNVVLADQGTAFYGMVEHRLPRGVTFIGQPLWGSIGYTLPAALGAGLAHRNRRTVLLLGDGAAQLTIQELGSFYREGLSPVIVVVNNDGYTIERAIHGATAPYNNIARWRWTDIPGALGVANHSSFRAETYGELDEAFAVAAELKDQMVFVEVIVPKLDLPSLLTALTRPAQDSNRIFQLPNPGWDN</sequence>
<keyword id="KW-0210">Decarboxylase</keyword>
<keyword id="KW-0456">Lyase</keyword>
<keyword id="KW-0460">Magnesium</keyword>
<keyword id="KW-0479">Metal-binding</keyword>
<keyword id="KW-1185">Reference proteome</keyword>
<keyword id="KW-0786">Thiamine pyrophosphate</keyword>
<organism>
    <name type="scientific">Mycobacterium leprae (strain TN)</name>
    <dbReference type="NCBI Taxonomy" id="272631"/>
    <lineage>
        <taxon>Bacteria</taxon>
        <taxon>Bacillati</taxon>
        <taxon>Actinomycetota</taxon>
        <taxon>Actinomycetes</taxon>
        <taxon>Mycobacteriales</taxon>
        <taxon>Mycobacteriaceae</taxon>
        <taxon>Mycobacterium</taxon>
    </lineage>
</organism>
<dbReference type="EC" id="4.1.1.-"/>
<dbReference type="EMBL" id="AL583924">
    <property type="protein sequence ID" value="CAC31122.1"/>
    <property type="molecule type" value="Genomic_DNA"/>
</dbReference>
<dbReference type="PIR" id="B87180">
    <property type="entry name" value="B87180"/>
</dbReference>
<dbReference type="RefSeq" id="NP_302424.1">
    <property type="nucleotide sequence ID" value="NC_002677.1"/>
</dbReference>
<dbReference type="RefSeq" id="WP_010908744.1">
    <property type="nucleotide sequence ID" value="NC_002677.1"/>
</dbReference>
<dbReference type="SMR" id="Q9CBD6"/>
<dbReference type="STRING" id="272631.gene:17576020"/>
<dbReference type="KEGG" id="mle:ML2167"/>
<dbReference type="PATRIC" id="fig|272631.5.peg.4107"/>
<dbReference type="Leproma" id="ML2167"/>
<dbReference type="eggNOG" id="COG3961">
    <property type="taxonomic scope" value="Bacteria"/>
</dbReference>
<dbReference type="HOGENOM" id="CLU_013748_0_2_11"/>
<dbReference type="OrthoDB" id="4959782at2"/>
<dbReference type="Proteomes" id="UP000000806">
    <property type="component" value="Chromosome"/>
</dbReference>
<dbReference type="GO" id="GO:0005829">
    <property type="term" value="C:cytosol"/>
    <property type="evidence" value="ECO:0007669"/>
    <property type="project" value="TreeGrafter"/>
</dbReference>
<dbReference type="GO" id="GO:0000287">
    <property type="term" value="F:magnesium ion binding"/>
    <property type="evidence" value="ECO:0007669"/>
    <property type="project" value="InterPro"/>
</dbReference>
<dbReference type="GO" id="GO:0004737">
    <property type="term" value="F:pyruvate decarboxylase activity"/>
    <property type="evidence" value="ECO:0007669"/>
    <property type="project" value="TreeGrafter"/>
</dbReference>
<dbReference type="GO" id="GO:0030976">
    <property type="term" value="F:thiamine pyrophosphate binding"/>
    <property type="evidence" value="ECO:0007669"/>
    <property type="project" value="InterPro"/>
</dbReference>
<dbReference type="GO" id="GO:0000949">
    <property type="term" value="P:aromatic amino acid family catabolic process to alcohol via Ehrlich pathway"/>
    <property type="evidence" value="ECO:0007669"/>
    <property type="project" value="TreeGrafter"/>
</dbReference>
<dbReference type="CDD" id="cd02005">
    <property type="entry name" value="TPP_PDC_IPDC"/>
    <property type="match status" value="1"/>
</dbReference>
<dbReference type="CDD" id="cd07038">
    <property type="entry name" value="TPP_PYR_PDC_IPDC_like"/>
    <property type="match status" value="1"/>
</dbReference>
<dbReference type="FunFam" id="3.40.50.970:FF:000019">
    <property type="entry name" value="Pyruvate decarboxylase isozyme"/>
    <property type="match status" value="1"/>
</dbReference>
<dbReference type="FunFam" id="3.40.50.970:FF:000024">
    <property type="entry name" value="Pyruvate decarboxylase isozyme"/>
    <property type="match status" value="1"/>
</dbReference>
<dbReference type="Gene3D" id="3.40.50.970">
    <property type="match status" value="2"/>
</dbReference>
<dbReference type="Gene3D" id="3.40.50.1220">
    <property type="entry name" value="TPP-binding domain"/>
    <property type="match status" value="1"/>
</dbReference>
<dbReference type="InterPro" id="IPR029035">
    <property type="entry name" value="DHS-like_NAD/FAD-binding_dom"/>
</dbReference>
<dbReference type="InterPro" id="IPR012110">
    <property type="entry name" value="PDC/IPDC-like"/>
</dbReference>
<dbReference type="InterPro" id="IPR029061">
    <property type="entry name" value="THDP-binding"/>
</dbReference>
<dbReference type="InterPro" id="IPR012000">
    <property type="entry name" value="Thiamin_PyroP_enz_cen_dom"/>
</dbReference>
<dbReference type="InterPro" id="IPR012001">
    <property type="entry name" value="Thiamin_PyroP_enz_TPP-bd_dom"/>
</dbReference>
<dbReference type="InterPro" id="IPR011766">
    <property type="entry name" value="TPP_enzyme_TPP-bd"/>
</dbReference>
<dbReference type="InterPro" id="IPR047214">
    <property type="entry name" value="TPP_PDC_IPDC"/>
</dbReference>
<dbReference type="InterPro" id="IPR047213">
    <property type="entry name" value="TPP_PYR_PDC_IPDC-like"/>
</dbReference>
<dbReference type="PANTHER" id="PTHR43452">
    <property type="entry name" value="PYRUVATE DECARBOXYLASE"/>
    <property type="match status" value="1"/>
</dbReference>
<dbReference type="PANTHER" id="PTHR43452:SF30">
    <property type="entry name" value="PYRUVATE DECARBOXYLASE ISOZYME 1-RELATED"/>
    <property type="match status" value="1"/>
</dbReference>
<dbReference type="Pfam" id="PF02775">
    <property type="entry name" value="TPP_enzyme_C"/>
    <property type="match status" value="1"/>
</dbReference>
<dbReference type="Pfam" id="PF00205">
    <property type="entry name" value="TPP_enzyme_M"/>
    <property type="match status" value="1"/>
</dbReference>
<dbReference type="Pfam" id="PF02776">
    <property type="entry name" value="TPP_enzyme_N"/>
    <property type="match status" value="1"/>
</dbReference>
<dbReference type="PIRSF" id="PIRSF036565">
    <property type="entry name" value="Pyruvt_ip_decrb"/>
    <property type="match status" value="1"/>
</dbReference>
<dbReference type="SUPFAM" id="SSF52467">
    <property type="entry name" value="DHS-like NAD/FAD-binding domain"/>
    <property type="match status" value="1"/>
</dbReference>
<dbReference type="SUPFAM" id="SSF52518">
    <property type="entry name" value="Thiamin diphosphate-binding fold (THDP-binding)"/>
    <property type="match status" value="2"/>
</dbReference>
<reference key="1">
    <citation type="journal article" date="2001" name="Nature">
        <title>Massive gene decay in the leprosy bacillus.</title>
        <authorList>
            <person name="Cole S.T."/>
            <person name="Eiglmeier K."/>
            <person name="Parkhill J."/>
            <person name="James K.D."/>
            <person name="Thomson N.R."/>
            <person name="Wheeler P.R."/>
            <person name="Honore N."/>
            <person name="Garnier T."/>
            <person name="Churcher C.M."/>
            <person name="Harris D.E."/>
            <person name="Mungall K.L."/>
            <person name="Basham D."/>
            <person name="Brown D."/>
            <person name="Chillingworth T."/>
            <person name="Connor R."/>
            <person name="Davies R.M."/>
            <person name="Devlin K."/>
            <person name="Duthoy S."/>
            <person name="Feltwell T."/>
            <person name="Fraser A."/>
            <person name="Hamlin N."/>
            <person name="Holroyd S."/>
            <person name="Hornsby T."/>
            <person name="Jagels K."/>
            <person name="Lacroix C."/>
            <person name="Maclean J."/>
            <person name="Moule S."/>
            <person name="Murphy L.D."/>
            <person name="Oliver K."/>
            <person name="Quail M.A."/>
            <person name="Rajandream M.A."/>
            <person name="Rutherford K.M."/>
            <person name="Rutter S."/>
            <person name="Seeger K."/>
            <person name="Simon S."/>
            <person name="Simmonds M."/>
            <person name="Skelton J."/>
            <person name="Squares R."/>
            <person name="Squares S."/>
            <person name="Stevens K."/>
            <person name="Taylor K."/>
            <person name="Whitehead S."/>
            <person name="Woodward J.R."/>
            <person name="Barrell B.G."/>
        </authorList>
    </citation>
    <scope>NUCLEOTIDE SEQUENCE [LARGE SCALE GENOMIC DNA]</scope>
    <source>
        <strain>TN</strain>
    </source>
</reference>
<name>KDC_MYCLE</name>
<comment type="function">
    <text>Decarboxylates branched-chain and aromatic alpha-keto acids to aldehydes.</text>
</comment>
<comment type="cofactor">
    <cofactor evidence="1">
        <name>a metal cation</name>
        <dbReference type="ChEBI" id="CHEBI:25213"/>
    </cofactor>
    <text evidence="1">Binds 1 metal ion per subunit.</text>
</comment>
<comment type="cofactor">
    <cofactor evidence="1">
        <name>thiamine diphosphate</name>
        <dbReference type="ChEBI" id="CHEBI:58937"/>
    </cofactor>
    <text evidence="1">Binds 1 thiamine pyrophosphate per subunit.</text>
</comment>
<comment type="similarity">
    <text evidence="2">Belongs to the TPP enzyme family.</text>
</comment>
<feature type="chain" id="PRO_0000333748" description="Alpha-keto-acid decarboxylase">
    <location>
        <begin position="1"/>
        <end position="569"/>
    </location>
</feature>
<feature type="region of interest" description="Thiamine pyrophosphate binding" evidence="1">
    <location>
        <begin position="392"/>
        <end position="474"/>
    </location>
</feature>
<feature type="binding site" evidence="1">
    <location>
        <position position="57"/>
    </location>
    <ligand>
        <name>thiamine diphosphate</name>
        <dbReference type="ChEBI" id="CHEBI:58937"/>
    </ligand>
</feature>
<feature type="binding site" evidence="1">
    <location>
        <position position="442"/>
    </location>
    <ligand>
        <name>Mg(2+)</name>
        <dbReference type="ChEBI" id="CHEBI:18420"/>
    </ligand>
</feature>
<feature type="binding site" evidence="1">
    <location>
        <position position="469"/>
    </location>
    <ligand>
        <name>Mg(2+)</name>
        <dbReference type="ChEBI" id="CHEBI:18420"/>
    </ligand>
</feature>
<feature type="binding site" evidence="1">
    <location>
        <position position="471"/>
    </location>
    <ligand>
        <name>Mg(2+)</name>
        <dbReference type="ChEBI" id="CHEBI:18420"/>
    </ligand>
</feature>
<evidence type="ECO:0000250" key="1"/>
<evidence type="ECO:0000305" key="2"/>
<accession>Q9CBD6</accession>
<gene>
    <name type="primary">kdc</name>
    <name type="ordered locus">ML2167</name>
</gene>
<proteinExistence type="inferred from homology"/>